<evidence type="ECO:0000255" key="1">
    <source>
        <dbReference type="HAMAP-Rule" id="MF_01554"/>
    </source>
</evidence>
<feature type="chain" id="PRO_1000201061" description="Phosphoglucosamine mutase">
    <location>
        <begin position="1"/>
        <end position="448"/>
    </location>
</feature>
<feature type="active site" description="Phosphoserine intermediate" evidence="1">
    <location>
        <position position="100"/>
    </location>
</feature>
<feature type="binding site" description="via phosphate group" evidence="1">
    <location>
        <position position="100"/>
    </location>
    <ligand>
        <name>Mg(2+)</name>
        <dbReference type="ChEBI" id="CHEBI:18420"/>
    </ligand>
</feature>
<feature type="binding site" evidence="1">
    <location>
        <position position="240"/>
    </location>
    <ligand>
        <name>Mg(2+)</name>
        <dbReference type="ChEBI" id="CHEBI:18420"/>
    </ligand>
</feature>
<feature type="binding site" evidence="1">
    <location>
        <position position="242"/>
    </location>
    <ligand>
        <name>Mg(2+)</name>
        <dbReference type="ChEBI" id="CHEBI:18420"/>
    </ligand>
</feature>
<feature type="binding site" evidence="1">
    <location>
        <position position="244"/>
    </location>
    <ligand>
        <name>Mg(2+)</name>
        <dbReference type="ChEBI" id="CHEBI:18420"/>
    </ligand>
</feature>
<feature type="modified residue" description="Phosphoserine" evidence="1">
    <location>
        <position position="100"/>
    </location>
</feature>
<organism>
    <name type="scientific">Bacillus cereus (strain G9842)</name>
    <dbReference type="NCBI Taxonomy" id="405531"/>
    <lineage>
        <taxon>Bacteria</taxon>
        <taxon>Bacillati</taxon>
        <taxon>Bacillota</taxon>
        <taxon>Bacilli</taxon>
        <taxon>Bacillales</taxon>
        <taxon>Bacillaceae</taxon>
        <taxon>Bacillus</taxon>
        <taxon>Bacillus cereus group</taxon>
    </lineage>
</organism>
<proteinExistence type="inferred from homology"/>
<keyword id="KW-0413">Isomerase</keyword>
<keyword id="KW-0460">Magnesium</keyword>
<keyword id="KW-0479">Metal-binding</keyword>
<keyword id="KW-0597">Phosphoprotein</keyword>
<protein>
    <recommendedName>
        <fullName evidence="1">Phosphoglucosamine mutase</fullName>
        <ecNumber evidence="1">5.4.2.10</ecNumber>
    </recommendedName>
</protein>
<sequence>MGKYFGTDGVRGVANKELTPELAFKIGRFGGYVLTKDTDRPKVIIGRDTRVSGHMLEGALVAGLLSTGAEVMRLGVISTPGVAYLTKALDAQAGVMISASHNPVQDNGIKFFGSDGFKLTDEQEAEIEALLDKEVDELPRPTGTNLGQVSDYFEGGQKYLQYIKQTVEEDFSGLHIALDCAHGATSSLAPYLFADLEADISTMGTSPNGMNINEGVGSTHPEVLAELVKEKGADIGLAFDGDGDRLIAVDEKGNIVDGDQIMFICAKYMKETGQLKHNTVVSTVMSNLGFYKALEANNITSDKTAVGDRYVMEEMKRGGYNLGGEQSGHIILLDYITTGDGMLSALQLVNIMKMTKKPLSELAGEMTKFPQLLVNVRVTDKKLALENEKIKEIIRVVEEEMNGDGRILVRPSGTEPLIRVMAEAPTQEVCDAFVHRIVEVVKAEVGAE</sequence>
<comment type="function">
    <text evidence="1">Catalyzes the conversion of glucosamine-6-phosphate to glucosamine-1-phosphate.</text>
</comment>
<comment type="catalytic activity">
    <reaction evidence="1">
        <text>alpha-D-glucosamine 1-phosphate = D-glucosamine 6-phosphate</text>
        <dbReference type="Rhea" id="RHEA:23424"/>
        <dbReference type="ChEBI" id="CHEBI:58516"/>
        <dbReference type="ChEBI" id="CHEBI:58725"/>
        <dbReference type="EC" id="5.4.2.10"/>
    </reaction>
</comment>
<comment type="cofactor">
    <cofactor evidence="1">
        <name>Mg(2+)</name>
        <dbReference type="ChEBI" id="CHEBI:18420"/>
    </cofactor>
    <text evidence="1">Binds 1 Mg(2+) ion per subunit.</text>
</comment>
<comment type="PTM">
    <text evidence="1">Activated by phosphorylation.</text>
</comment>
<comment type="similarity">
    <text evidence="1">Belongs to the phosphohexose mutase family.</text>
</comment>
<reference key="1">
    <citation type="submission" date="2008-10" db="EMBL/GenBank/DDBJ databases">
        <title>Genome sequence of Bacillus cereus G9842.</title>
        <authorList>
            <person name="Dodson R.J."/>
            <person name="Durkin A.S."/>
            <person name="Rosovitz M.J."/>
            <person name="Rasko D.A."/>
            <person name="Hoffmaster A."/>
            <person name="Ravel J."/>
            <person name="Sutton G."/>
        </authorList>
    </citation>
    <scope>NUCLEOTIDE SEQUENCE [LARGE SCALE GENOMIC DNA]</scope>
    <source>
        <strain>G9842</strain>
    </source>
</reference>
<dbReference type="EC" id="5.4.2.10" evidence="1"/>
<dbReference type="EMBL" id="CP001186">
    <property type="protein sequence ID" value="ACK96092.1"/>
    <property type="molecule type" value="Genomic_DNA"/>
</dbReference>
<dbReference type="RefSeq" id="WP_000521478.1">
    <property type="nucleotide sequence ID" value="NC_011772.1"/>
</dbReference>
<dbReference type="SMR" id="B7ITV9"/>
<dbReference type="KEGG" id="bcg:BCG9842_B5135"/>
<dbReference type="HOGENOM" id="CLU_016950_7_0_9"/>
<dbReference type="Proteomes" id="UP000006744">
    <property type="component" value="Chromosome"/>
</dbReference>
<dbReference type="GO" id="GO:0005829">
    <property type="term" value="C:cytosol"/>
    <property type="evidence" value="ECO:0007669"/>
    <property type="project" value="TreeGrafter"/>
</dbReference>
<dbReference type="GO" id="GO:0000287">
    <property type="term" value="F:magnesium ion binding"/>
    <property type="evidence" value="ECO:0007669"/>
    <property type="project" value="UniProtKB-UniRule"/>
</dbReference>
<dbReference type="GO" id="GO:0008966">
    <property type="term" value="F:phosphoglucosamine mutase activity"/>
    <property type="evidence" value="ECO:0007669"/>
    <property type="project" value="UniProtKB-UniRule"/>
</dbReference>
<dbReference type="GO" id="GO:0004615">
    <property type="term" value="F:phosphomannomutase activity"/>
    <property type="evidence" value="ECO:0007669"/>
    <property type="project" value="TreeGrafter"/>
</dbReference>
<dbReference type="GO" id="GO:0005975">
    <property type="term" value="P:carbohydrate metabolic process"/>
    <property type="evidence" value="ECO:0007669"/>
    <property type="project" value="InterPro"/>
</dbReference>
<dbReference type="GO" id="GO:0009252">
    <property type="term" value="P:peptidoglycan biosynthetic process"/>
    <property type="evidence" value="ECO:0007669"/>
    <property type="project" value="TreeGrafter"/>
</dbReference>
<dbReference type="GO" id="GO:0006048">
    <property type="term" value="P:UDP-N-acetylglucosamine biosynthetic process"/>
    <property type="evidence" value="ECO:0007669"/>
    <property type="project" value="TreeGrafter"/>
</dbReference>
<dbReference type="CDD" id="cd05802">
    <property type="entry name" value="GlmM"/>
    <property type="match status" value="1"/>
</dbReference>
<dbReference type="FunFam" id="3.30.310.50:FF:000001">
    <property type="entry name" value="Phosphoglucosamine mutase"/>
    <property type="match status" value="1"/>
</dbReference>
<dbReference type="FunFam" id="3.40.120.10:FF:000001">
    <property type="entry name" value="Phosphoglucosamine mutase"/>
    <property type="match status" value="1"/>
</dbReference>
<dbReference type="FunFam" id="3.40.120.10:FF:000002">
    <property type="entry name" value="Phosphoglucosamine mutase"/>
    <property type="match status" value="1"/>
</dbReference>
<dbReference type="Gene3D" id="3.40.120.10">
    <property type="entry name" value="Alpha-D-Glucose-1,6-Bisphosphate, subunit A, domain 3"/>
    <property type="match status" value="3"/>
</dbReference>
<dbReference type="Gene3D" id="3.30.310.50">
    <property type="entry name" value="Alpha-D-phosphohexomutase, C-terminal domain"/>
    <property type="match status" value="1"/>
</dbReference>
<dbReference type="HAMAP" id="MF_01554_B">
    <property type="entry name" value="GlmM_B"/>
    <property type="match status" value="1"/>
</dbReference>
<dbReference type="InterPro" id="IPR005844">
    <property type="entry name" value="A-D-PHexomutase_a/b/a-I"/>
</dbReference>
<dbReference type="InterPro" id="IPR016055">
    <property type="entry name" value="A-D-PHexomutase_a/b/a-I/II/III"/>
</dbReference>
<dbReference type="InterPro" id="IPR005845">
    <property type="entry name" value="A-D-PHexomutase_a/b/a-II"/>
</dbReference>
<dbReference type="InterPro" id="IPR005846">
    <property type="entry name" value="A-D-PHexomutase_a/b/a-III"/>
</dbReference>
<dbReference type="InterPro" id="IPR005843">
    <property type="entry name" value="A-D-PHexomutase_C"/>
</dbReference>
<dbReference type="InterPro" id="IPR036900">
    <property type="entry name" value="A-D-PHexomutase_C_sf"/>
</dbReference>
<dbReference type="InterPro" id="IPR016066">
    <property type="entry name" value="A-D-PHexomutase_CS"/>
</dbReference>
<dbReference type="InterPro" id="IPR005841">
    <property type="entry name" value="Alpha-D-phosphohexomutase_SF"/>
</dbReference>
<dbReference type="InterPro" id="IPR006352">
    <property type="entry name" value="GlmM_bact"/>
</dbReference>
<dbReference type="InterPro" id="IPR050060">
    <property type="entry name" value="Phosphoglucosamine_mutase"/>
</dbReference>
<dbReference type="NCBIfam" id="TIGR01455">
    <property type="entry name" value="glmM"/>
    <property type="match status" value="1"/>
</dbReference>
<dbReference type="NCBIfam" id="NF008139">
    <property type="entry name" value="PRK10887.1"/>
    <property type="match status" value="1"/>
</dbReference>
<dbReference type="PANTHER" id="PTHR42946:SF1">
    <property type="entry name" value="PHOSPHOGLUCOMUTASE (ALPHA-D-GLUCOSE-1,6-BISPHOSPHATE-DEPENDENT)"/>
    <property type="match status" value="1"/>
</dbReference>
<dbReference type="PANTHER" id="PTHR42946">
    <property type="entry name" value="PHOSPHOHEXOSE MUTASE"/>
    <property type="match status" value="1"/>
</dbReference>
<dbReference type="Pfam" id="PF02878">
    <property type="entry name" value="PGM_PMM_I"/>
    <property type="match status" value="1"/>
</dbReference>
<dbReference type="Pfam" id="PF02879">
    <property type="entry name" value="PGM_PMM_II"/>
    <property type="match status" value="1"/>
</dbReference>
<dbReference type="Pfam" id="PF02880">
    <property type="entry name" value="PGM_PMM_III"/>
    <property type="match status" value="1"/>
</dbReference>
<dbReference type="Pfam" id="PF00408">
    <property type="entry name" value="PGM_PMM_IV"/>
    <property type="match status" value="1"/>
</dbReference>
<dbReference type="PRINTS" id="PR00509">
    <property type="entry name" value="PGMPMM"/>
</dbReference>
<dbReference type="SUPFAM" id="SSF55957">
    <property type="entry name" value="Phosphoglucomutase, C-terminal domain"/>
    <property type="match status" value="1"/>
</dbReference>
<dbReference type="SUPFAM" id="SSF53738">
    <property type="entry name" value="Phosphoglucomutase, first 3 domains"/>
    <property type="match status" value="3"/>
</dbReference>
<dbReference type="PROSITE" id="PS00710">
    <property type="entry name" value="PGM_PMM"/>
    <property type="match status" value="1"/>
</dbReference>
<name>GLMM_BACC2</name>
<gene>
    <name evidence="1" type="primary">glmM</name>
    <name type="ordered locus">BCG9842_B5135</name>
</gene>
<accession>B7ITV9</accession>